<gene>
    <name evidence="1" type="primary">fabZ</name>
    <name type="ordered locus">ERGA_CDS_08680</name>
</gene>
<protein>
    <recommendedName>
        <fullName evidence="1">3-hydroxyacyl-[acyl-carrier-protein] dehydratase FabZ</fullName>
        <ecNumber evidence="1">4.2.1.59</ecNumber>
    </recommendedName>
    <alternativeName>
        <fullName evidence="1">(3R)-hydroxymyristoyl-[acyl-carrier-protein] dehydratase</fullName>
        <shortName evidence="1">(3R)-hydroxymyristoyl-ACP dehydrase</shortName>
    </alternativeName>
    <alternativeName>
        <fullName evidence="1">Beta-hydroxyacyl-ACP dehydratase</fullName>
    </alternativeName>
</protein>
<feature type="chain" id="PRO_1000197294" description="3-hydroxyacyl-[acyl-carrier-protein] dehydratase FabZ">
    <location>
        <begin position="1"/>
        <end position="145"/>
    </location>
</feature>
<feature type="active site" evidence="1">
    <location>
        <position position="49"/>
    </location>
</feature>
<sequence>MQFNIQDIIKMLPHSYPFLLLDKVTACVPNESATAIKNVTFNEPFFIGHFPNNPVMPGVLIVEAMAQACLVCVMSDSKHNFENYTIYFMSIELAKFRKPVIPGDILTIEVNVIHKRKDTCRFQCFARVDQALASEAQILAMIKKN</sequence>
<name>FABZ_EHRRG</name>
<accession>Q5FGI7</accession>
<evidence type="ECO:0000255" key="1">
    <source>
        <dbReference type="HAMAP-Rule" id="MF_00406"/>
    </source>
</evidence>
<proteinExistence type="inferred from homology"/>
<dbReference type="EC" id="4.2.1.59" evidence="1"/>
<dbReference type="EMBL" id="CR925677">
    <property type="protein sequence ID" value="CAI28320.1"/>
    <property type="molecule type" value="Genomic_DNA"/>
</dbReference>
<dbReference type="RefSeq" id="WP_011255921.1">
    <property type="nucleotide sequence ID" value="NC_006831.1"/>
</dbReference>
<dbReference type="SMR" id="Q5FGI7"/>
<dbReference type="KEGG" id="erg:ERGA_CDS_08680"/>
<dbReference type="HOGENOM" id="CLU_078912_1_0_5"/>
<dbReference type="OrthoDB" id="9772788at2"/>
<dbReference type="Proteomes" id="UP000000533">
    <property type="component" value="Chromosome"/>
</dbReference>
<dbReference type="GO" id="GO:0005737">
    <property type="term" value="C:cytoplasm"/>
    <property type="evidence" value="ECO:0007669"/>
    <property type="project" value="UniProtKB-SubCell"/>
</dbReference>
<dbReference type="GO" id="GO:0016020">
    <property type="term" value="C:membrane"/>
    <property type="evidence" value="ECO:0007669"/>
    <property type="project" value="GOC"/>
</dbReference>
<dbReference type="GO" id="GO:0019171">
    <property type="term" value="F:(3R)-hydroxyacyl-[acyl-carrier-protein] dehydratase activity"/>
    <property type="evidence" value="ECO:0007669"/>
    <property type="project" value="UniProtKB-EC"/>
</dbReference>
<dbReference type="GO" id="GO:0006633">
    <property type="term" value="P:fatty acid biosynthetic process"/>
    <property type="evidence" value="ECO:0007669"/>
    <property type="project" value="UniProtKB-UniRule"/>
</dbReference>
<dbReference type="GO" id="GO:0009245">
    <property type="term" value="P:lipid A biosynthetic process"/>
    <property type="evidence" value="ECO:0007669"/>
    <property type="project" value="UniProtKB-UniRule"/>
</dbReference>
<dbReference type="CDD" id="cd01288">
    <property type="entry name" value="FabZ"/>
    <property type="match status" value="1"/>
</dbReference>
<dbReference type="FunFam" id="3.10.129.10:FF:000001">
    <property type="entry name" value="3-hydroxyacyl-[acyl-carrier-protein] dehydratase FabZ"/>
    <property type="match status" value="1"/>
</dbReference>
<dbReference type="Gene3D" id="3.10.129.10">
    <property type="entry name" value="Hotdog Thioesterase"/>
    <property type="match status" value="1"/>
</dbReference>
<dbReference type="HAMAP" id="MF_00406">
    <property type="entry name" value="FabZ"/>
    <property type="match status" value="1"/>
</dbReference>
<dbReference type="InterPro" id="IPR013114">
    <property type="entry name" value="FabA_FabZ"/>
</dbReference>
<dbReference type="InterPro" id="IPR010084">
    <property type="entry name" value="FabZ"/>
</dbReference>
<dbReference type="InterPro" id="IPR029069">
    <property type="entry name" value="HotDog_dom_sf"/>
</dbReference>
<dbReference type="NCBIfam" id="TIGR01750">
    <property type="entry name" value="fabZ"/>
    <property type="match status" value="1"/>
</dbReference>
<dbReference type="NCBIfam" id="NF000582">
    <property type="entry name" value="PRK00006.1"/>
    <property type="match status" value="1"/>
</dbReference>
<dbReference type="PANTHER" id="PTHR30272">
    <property type="entry name" value="3-HYDROXYACYL-[ACYL-CARRIER-PROTEIN] DEHYDRATASE"/>
    <property type="match status" value="1"/>
</dbReference>
<dbReference type="PANTHER" id="PTHR30272:SF1">
    <property type="entry name" value="3-HYDROXYACYL-[ACYL-CARRIER-PROTEIN] DEHYDRATASE"/>
    <property type="match status" value="1"/>
</dbReference>
<dbReference type="Pfam" id="PF07977">
    <property type="entry name" value="FabA"/>
    <property type="match status" value="1"/>
</dbReference>
<dbReference type="SUPFAM" id="SSF54637">
    <property type="entry name" value="Thioesterase/thiol ester dehydrase-isomerase"/>
    <property type="match status" value="1"/>
</dbReference>
<keyword id="KW-0963">Cytoplasm</keyword>
<keyword id="KW-0441">Lipid A biosynthesis</keyword>
<keyword id="KW-0444">Lipid biosynthesis</keyword>
<keyword id="KW-0443">Lipid metabolism</keyword>
<keyword id="KW-0456">Lyase</keyword>
<comment type="function">
    <text evidence="1">Involved in unsaturated fatty acids biosynthesis. Catalyzes the dehydration of short chain beta-hydroxyacyl-ACPs and long chain saturated and unsaturated beta-hydroxyacyl-ACPs.</text>
</comment>
<comment type="catalytic activity">
    <reaction evidence="1">
        <text>a (3R)-hydroxyacyl-[ACP] = a (2E)-enoyl-[ACP] + H2O</text>
        <dbReference type="Rhea" id="RHEA:13097"/>
        <dbReference type="Rhea" id="RHEA-COMP:9925"/>
        <dbReference type="Rhea" id="RHEA-COMP:9945"/>
        <dbReference type="ChEBI" id="CHEBI:15377"/>
        <dbReference type="ChEBI" id="CHEBI:78784"/>
        <dbReference type="ChEBI" id="CHEBI:78827"/>
        <dbReference type="EC" id="4.2.1.59"/>
    </reaction>
</comment>
<comment type="subcellular location">
    <subcellularLocation>
        <location evidence="1">Cytoplasm</location>
    </subcellularLocation>
</comment>
<comment type="similarity">
    <text evidence="1">Belongs to the thioester dehydratase family. FabZ subfamily.</text>
</comment>
<organism>
    <name type="scientific">Ehrlichia ruminantium (strain Gardel)</name>
    <dbReference type="NCBI Taxonomy" id="302409"/>
    <lineage>
        <taxon>Bacteria</taxon>
        <taxon>Pseudomonadati</taxon>
        <taxon>Pseudomonadota</taxon>
        <taxon>Alphaproteobacteria</taxon>
        <taxon>Rickettsiales</taxon>
        <taxon>Anaplasmataceae</taxon>
        <taxon>Ehrlichia</taxon>
    </lineage>
</organism>
<reference key="1">
    <citation type="journal article" date="2006" name="J. Bacteriol.">
        <title>Comparative genomic analysis of three strains of Ehrlichia ruminantium reveals an active process of genome size plasticity.</title>
        <authorList>
            <person name="Frutos R."/>
            <person name="Viari A."/>
            <person name="Ferraz C."/>
            <person name="Morgat A."/>
            <person name="Eychenie S."/>
            <person name="Kandassamy Y."/>
            <person name="Chantal I."/>
            <person name="Bensaid A."/>
            <person name="Coissac E."/>
            <person name="Vachiery N."/>
            <person name="Demaille J."/>
            <person name="Martinez D."/>
        </authorList>
    </citation>
    <scope>NUCLEOTIDE SEQUENCE [LARGE SCALE GENOMIC DNA]</scope>
    <source>
        <strain>Gardel</strain>
    </source>
</reference>